<comment type="alternative products">
    <event type="alternative splicing"/>
    <isoform>
        <id>Q9CRW3-1</id>
        <name>1</name>
        <sequence type="displayed"/>
    </isoform>
    <isoform>
        <id>Q9CRW3-2</id>
        <name>2</name>
        <sequence type="described" ref="VSP_032430"/>
    </isoform>
</comment>
<comment type="similarity">
    <text evidence="2">Belongs to the UPF0538 family.</text>
</comment>
<feature type="chain" id="PRO_0000325825" description="UPF0538 protein C2orf76 homolog">
    <location>
        <begin position="1"/>
        <end position="126"/>
    </location>
</feature>
<feature type="splice variant" id="VSP_032430" description="In isoform 2." evidence="1">
    <original>TNELVLGLEDDDTLLLKEDRTLKDSGVASETEIAFFCGEDYKRYKANPISSW</original>
    <variation>PVKLKLHSSVEKIISDTKLIPSRPGESGCGPLFHKFCFFINCQINLF</variation>
    <location>
        <begin position="75"/>
        <end position="126"/>
    </location>
</feature>
<name>CB076_MOUSE</name>
<dbReference type="EMBL" id="AK014026">
    <property type="protein sequence ID" value="BAB29121.1"/>
    <property type="molecule type" value="mRNA"/>
</dbReference>
<dbReference type="EMBL" id="AC139867">
    <property type="status" value="NOT_ANNOTATED_CDS"/>
    <property type="molecule type" value="Genomic_DNA"/>
</dbReference>
<dbReference type="EMBL" id="BC028767">
    <property type="protein sequence ID" value="AAH28767.1"/>
    <property type="molecule type" value="mRNA"/>
</dbReference>
<dbReference type="CCDS" id="CCDS15232.1">
    <molecule id="Q9CRW3-1"/>
</dbReference>
<dbReference type="CCDS" id="CCDS48342.1">
    <molecule id="Q9CRW3-2"/>
</dbReference>
<dbReference type="RefSeq" id="NP_001165545.1">
    <molecule id="Q9CRW3-2"/>
    <property type="nucleotide sequence ID" value="NM_001172074.1"/>
</dbReference>
<dbReference type="RefSeq" id="NP_082715.1">
    <molecule id="Q9CRW3-1"/>
    <property type="nucleotide sequence ID" value="NM_028439.2"/>
</dbReference>
<dbReference type="RefSeq" id="XP_030099011.1">
    <molecule id="Q9CRW3-2"/>
    <property type="nucleotide sequence ID" value="XM_030243151.2"/>
</dbReference>
<dbReference type="FunCoup" id="Q9CRW3">
    <property type="interactions" value="25"/>
</dbReference>
<dbReference type="PhosphoSitePlus" id="Q9CRW3"/>
<dbReference type="PaxDb" id="10090-ENSMUSP00000108263"/>
<dbReference type="Pumba" id="Q9CRW3"/>
<dbReference type="DNASU" id="73103"/>
<dbReference type="Ensembl" id="ENSMUST00000027637.13">
    <molecule id="Q9CRW3-2"/>
    <property type="protein sequence ID" value="ENSMUSP00000027637.7"/>
    <property type="gene ID" value="ENSMUSG00000026388.16"/>
</dbReference>
<dbReference type="Ensembl" id="ENSMUST00000056038.15">
    <molecule id="Q9CRW3-2"/>
    <property type="protein sequence ID" value="ENSMUSP00000053335.9"/>
    <property type="gene ID" value="ENSMUSG00000026388.16"/>
</dbReference>
<dbReference type="Ensembl" id="ENSMUST00000112644.9">
    <molecule id="Q9CRW3-1"/>
    <property type="protein sequence ID" value="ENSMUSP00000108263.3"/>
    <property type="gene ID" value="ENSMUSG00000026388.16"/>
</dbReference>
<dbReference type="GeneID" id="73103"/>
<dbReference type="KEGG" id="mmu:73103"/>
<dbReference type="UCSC" id="uc007cjg.1">
    <molecule id="Q9CRW3-2"/>
    <property type="organism name" value="mouse"/>
</dbReference>
<dbReference type="UCSC" id="uc007cjh.2">
    <molecule id="Q9CRW3-1"/>
    <property type="organism name" value="mouse"/>
</dbReference>
<dbReference type="AGR" id="MGI:1920353"/>
<dbReference type="MGI" id="MGI:1920353">
    <property type="gene designation" value="3110009E18Rik"/>
</dbReference>
<dbReference type="VEuPathDB" id="HostDB:ENSMUSG00000026388"/>
<dbReference type="eggNOG" id="KOG4147">
    <property type="taxonomic scope" value="Eukaryota"/>
</dbReference>
<dbReference type="HOGENOM" id="CLU_2037306_0_0_1"/>
<dbReference type="InParanoid" id="Q9CRW3"/>
<dbReference type="OMA" id="YRNVKNH"/>
<dbReference type="OrthoDB" id="937at2759"/>
<dbReference type="PhylomeDB" id="Q9CRW3"/>
<dbReference type="TreeFam" id="TF300221"/>
<dbReference type="BioGRID-ORCS" id="73103">
    <property type="hits" value="6 hits in 79 CRISPR screens"/>
</dbReference>
<dbReference type="PRO" id="PR:Q9CRW3"/>
<dbReference type="Proteomes" id="UP000000589">
    <property type="component" value="Chromosome 1"/>
</dbReference>
<dbReference type="RNAct" id="Q9CRW3">
    <property type="molecule type" value="protein"/>
</dbReference>
<dbReference type="Bgee" id="ENSMUSG00000026388">
    <property type="expression patterns" value="Expressed in animal zygote and 252 other cell types or tissues"/>
</dbReference>
<dbReference type="ExpressionAtlas" id="Q9CRW3">
    <property type="expression patterns" value="baseline and differential"/>
</dbReference>
<dbReference type="InterPro" id="IPR018794">
    <property type="entry name" value="UPF0538"/>
</dbReference>
<dbReference type="PANTHER" id="PTHR18444">
    <property type="entry name" value="UPF0538 FAMILY MEMBER"/>
    <property type="match status" value="1"/>
</dbReference>
<dbReference type="PANTHER" id="PTHR18444:SF9">
    <property type="entry name" value="UPF0538 PROTEIN C2ORF76"/>
    <property type="match status" value="1"/>
</dbReference>
<dbReference type="Pfam" id="PF10209">
    <property type="entry name" value="DUF2340"/>
    <property type="match status" value="1"/>
</dbReference>
<protein>
    <recommendedName>
        <fullName>UPF0538 protein C2orf76 homolog</fullName>
    </recommendedName>
</protein>
<accession>Q9CRW3</accession>
<accession>Q8K163</accession>
<evidence type="ECO:0000303" key="1">
    <source>
    </source>
</evidence>
<evidence type="ECO:0000305" key="2"/>
<proteinExistence type="evidence at protein level"/>
<sequence>MAAEEATLTVRLIRSFEHRNFKPVVYHGVNLHQTVKEFIIFLKQDVPLRTSLPPPLRNYKYDTLKILHQAHKAKTNELVLGLEDDDTLLLKEDRTLKDSGVASETEIAFFCGEDYKRYKANPISSW</sequence>
<reference key="1">
    <citation type="journal article" date="2005" name="Science">
        <title>The transcriptional landscape of the mammalian genome.</title>
        <authorList>
            <person name="Carninci P."/>
            <person name="Kasukawa T."/>
            <person name="Katayama S."/>
            <person name="Gough J."/>
            <person name="Frith M.C."/>
            <person name="Maeda N."/>
            <person name="Oyama R."/>
            <person name="Ravasi T."/>
            <person name="Lenhard B."/>
            <person name="Wells C."/>
            <person name="Kodzius R."/>
            <person name="Shimokawa K."/>
            <person name="Bajic V.B."/>
            <person name="Brenner S.E."/>
            <person name="Batalov S."/>
            <person name="Forrest A.R."/>
            <person name="Zavolan M."/>
            <person name="Davis M.J."/>
            <person name="Wilming L.G."/>
            <person name="Aidinis V."/>
            <person name="Allen J.E."/>
            <person name="Ambesi-Impiombato A."/>
            <person name="Apweiler R."/>
            <person name="Aturaliya R.N."/>
            <person name="Bailey T.L."/>
            <person name="Bansal M."/>
            <person name="Baxter L."/>
            <person name="Beisel K.W."/>
            <person name="Bersano T."/>
            <person name="Bono H."/>
            <person name="Chalk A.M."/>
            <person name="Chiu K.P."/>
            <person name="Choudhary V."/>
            <person name="Christoffels A."/>
            <person name="Clutterbuck D.R."/>
            <person name="Crowe M.L."/>
            <person name="Dalla E."/>
            <person name="Dalrymple B.P."/>
            <person name="de Bono B."/>
            <person name="Della Gatta G."/>
            <person name="di Bernardo D."/>
            <person name="Down T."/>
            <person name="Engstrom P."/>
            <person name="Fagiolini M."/>
            <person name="Faulkner G."/>
            <person name="Fletcher C.F."/>
            <person name="Fukushima T."/>
            <person name="Furuno M."/>
            <person name="Futaki S."/>
            <person name="Gariboldi M."/>
            <person name="Georgii-Hemming P."/>
            <person name="Gingeras T.R."/>
            <person name="Gojobori T."/>
            <person name="Green R.E."/>
            <person name="Gustincich S."/>
            <person name="Harbers M."/>
            <person name="Hayashi Y."/>
            <person name="Hensch T.K."/>
            <person name="Hirokawa N."/>
            <person name="Hill D."/>
            <person name="Huminiecki L."/>
            <person name="Iacono M."/>
            <person name="Ikeo K."/>
            <person name="Iwama A."/>
            <person name="Ishikawa T."/>
            <person name="Jakt M."/>
            <person name="Kanapin A."/>
            <person name="Katoh M."/>
            <person name="Kawasawa Y."/>
            <person name="Kelso J."/>
            <person name="Kitamura H."/>
            <person name="Kitano H."/>
            <person name="Kollias G."/>
            <person name="Krishnan S.P."/>
            <person name="Kruger A."/>
            <person name="Kummerfeld S.K."/>
            <person name="Kurochkin I.V."/>
            <person name="Lareau L.F."/>
            <person name="Lazarevic D."/>
            <person name="Lipovich L."/>
            <person name="Liu J."/>
            <person name="Liuni S."/>
            <person name="McWilliam S."/>
            <person name="Madan Babu M."/>
            <person name="Madera M."/>
            <person name="Marchionni L."/>
            <person name="Matsuda H."/>
            <person name="Matsuzawa S."/>
            <person name="Miki H."/>
            <person name="Mignone F."/>
            <person name="Miyake S."/>
            <person name="Morris K."/>
            <person name="Mottagui-Tabar S."/>
            <person name="Mulder N."/>
            <person name="Nakano N."/>
            <person name="Nakauchi H."/>
            <person name="Ng P."/>
            <person name="Nilsson R."/>
            <person name="Nishiguchi S."/>
            <person name="Nishikawa S."/>
            <person name="Nori F."/>
            <person name="Ohara O."/>
            <person name="Okazaki Y."/>
            <person name="Orlando V."/>
            <person name="Pang K.C."/>
            <person name="Pavan W.J."/>
            <person name="Pavesi G."/>
            <person name="Pesole G."/>
            <person name="Petrovsky N."/>
            <person name="Piazza S."/>
            <person name="Reed J."/>
            <person name="Reid J.F."/>
            <person name="Ring B.Z."/>
            <person name="Ringwald M."/>
            <person name="Rost B."/>
            <person name="Ruan Y."/>
            <person name="Salzberg S.L."/>
            <person name="Sandelin A."/>
            <person name="Schneider C."/>
            <person name="Schoenbach C."/>
            <person name="Sekiguchi K."/>
            <person name="Semple C.A."/>
            <person name="Seno S."/>
            <person name="Sessa L."/>
            <person name="Sheng Y."/>
            <person name="Shibata Y."/>
            <person name="Shimada H."/>
            <person name="Shimada K."/>
            <person name="Silva D."/>
            <person name="Sinclair B."/>
            <person name="Sperling S."/>
            <person name="Stupka E."/>
            <person name="Sugiura K."/>
            <person name="Sultana R."/>
            <person name="Takenaka Y."/>
            <person name="Taki K."/>
            <person name="Tammoja K."/>
            <person name="Tan S.L."/>
            <person name="Tang S."/>
            <person name="Taylor M.S."/>
            <person name="Tegner J."/>
            <person name="Teichmann S.A."/>
            <person name="Ueda H.R."/>
            <person name="van Nimwegen E."/>
            <person name="Verardo R."/>
            <person name="Wei C.L."/>
            <person name="Yagi K."/>
            <person name="Yamanishi H."/>
            <person name="Zabarovsky E."/>
            <person name="Zhu S."/>
            <person name="Zimmer A."/>
            <person name="Hide W."/>
            <person name="Bult C."/>
            <person name="Grimmond S.M."/>
            <person name="Teasdale R.D."/>
            <person name="Liu E.T."/>
            <person name="Brusic V."/>
            <person name="Quackenbush J."/>
            <person name="Wahlestedt C."/>
            <person name="Mattick J.S."/>
            <person name="Hume D.A."/>
            <person name="Kai C."/>
            <person name="Sasaki D."/>
            <person name="Tomaru Y."/>
            <person name="Fukuda S."/>
            <person name="Kanamori-Katayama M."/>
            <person name="Suzuki M."/>
            <person name="Aoki J."/>
            <person name="Arakawa T."/>
            <person name="Iida J."/>
            <person name="Imamura K."/>
            <person name="Itoh M."/>
            <person name="Kato T."/>
            <person name="Kawaji H."/>
            <person name="Kawagashira N."/>
            <person name="Kawashima T."/>
            <person name="Kojima M."/>
            <person name="Kondo S."/>
            <person name="Konno H."/>
            <person name="Nakano K."/>
            <person name="Ninomiya N."/>
            <person name="Nishio T."/>
            <person name="Okada M."/>
            <person name="Plessy C."/>
            <person name="Shibata K."/>
            <person name="Shiraki T."/>
            <person name="Suzuki S."/>
            <person name="Tagami M."/>
            <person name="Waki K."/>
            <person name="Watahiki A."/>
            <person name="Okamura-Oho Y."/>
            <person name="Suzuki H."/>
            <person name="Kawai J."/>
            <person name="Hayashizaki Y."/>
        </authorList>
    </citation>
    <scope>NUCLEOTIDE SEQUENCE [LARGE SCALE MRNA] (ISOFORM 2)</scope>
    <source>
        <strain>C57BL/6J</strain>
        <tissue>Head</tissue>
    </source>
</reference>
<reference key="2">
    <citation type="journal article" date="2009" name="PLoS Biol.">
        <title>Lineage-specific biology revealed by a finished genome assembly of the mouse.</title>
        <authorList>
            <person name="Church D.M."/>
            <person name="Goodstadt L."/>
            <person name="Hillier L.W."/>
            <person name="Zody M.C."/>
            <person name="Goldstein S."/>
            <person name="She X."/>
            <person name="Bult C.J."/>
            <person name="Agarwala R."/>
            <person name="Cherry J.L."/>
            <person name="DiCuccio M."/>
            <person name="Hlavina W."/>
            <person name="Kapustin Y."/>
            <person name="Meric P."/>
            <person name="Maglott D."/>
            <person name="Birtle Z."/>
            <person name="Marques A.C."/>
            <person name="Graves T."/>
            <person name="Zhou S."/>
            <person name="Teague B."/>
            <person name="Potamousis K."/>
            <person name="Churas C."/>
            <person name="Place M."/>
            <person name="Herschleb J."/>
            <person name="Runnheim R."/>
            <person name="Forrest D."/>
            <person name="Amos-Landgraf J."/>
            <person name="Schwartz D.C."/>
            <person name="Cheng Z."/>
            <person name="Lindblad-Toh K."/>
            <person name="Eichler E.E."/>
            <person name="Ponting C.P."/>
        </authorList>
    </citation>
    <scope>NUCLEOTIDE SEQUENCE [LARGE SCALE GENOMIC DNA]</scope>
    <source>
        <strain>C57BL/6J</strain>
        <tissue>Head</tissue>
    </source>
</reference>
<reference key="3">
    <citation type="journal article" date="2004" name="Genome Res.">
        <title>The status, quality, and expansion of the NIH full-length cDNA project: the Mammalian Gene Collection (MGC).</title>
        <authorList>
            <consortium name="The MGC Project Team"/>
        </authorList>
    </citation>
    <scope>NUCLEOTIDE SEQUENCE [LARGE SCALE MRNA] (ISOFORM 1)</scope>
    <source>
        <strain>C57BL/6J</strain>
        <tissue>Thymus</tissue>
    </source>
</reference>
<reference key="4">
    <citation type="journal article" date="2010" name="Cell">
        <title>A tissue-specific atlas of mouse protein phosphorylation and expression.</title>
        <authorList>
            <person name="Huttlin E.L."/>
            <person name="Jedrychowski M.P."/>
            <person name="Elias J.E."/>
            <person name="Goswami T."/>
            <person name="Rad R."/>
            <person name="Beausoleil S.A."/>
            <person name="Villen J."/>
            <person name="Haas W."/>
            <person name="Sowa M.E."/>
            <person name="Gygi S.P."/>
        </authorList>
    </citation>
    <scope>IDENTIFICATION BY MASS SPECTROMETRY [LARGE SCALE ANALYSIS]</scope>
    <source>
        <tissue>Testis</tissue>
    </source>
</reference>
<keyword id="KW-0025">Alternative splicing</keyword>
<keyword id="KW-1185">Reference proteome</keyword>
<organism>
    <name type="scientific">Mus musculus</name>
    <name type="common">Mouse</name>
    <dbReference type="NCBI Taxonomy" id="10090"/>
    <lineage>
        <taxon>Eukaryota</taxon>
        <taxon>Metazoa</taxon>
        <taxon>Chordata</taxon>
        <taxon>Craniata</taxon>
        <taxon>Vertebrata</taxon>
        <taxon>Euteleostomi</taxon>
        <taxon>Mammalia</taxon>
        <taxon>Eutheria</taxon>
        <taxon>Euarchontoglires</taxon>
        <taxon>Glires</taxon>
        <taxon>Rodentia</taxon>
        <taxon>Myomorpha</taxon>
        <taxon>Muroidea</taxon>
        <taxon>Muridae</taxon>
        <taxon>Murinae</taxon>
        <taxon>Mus</taxon>
        <taxon>Mus</taxon>
    </lineage>
</organism>